<keyword id="KW-0067">ATP-binding</keyword>
<keyword id="KW-0436">Ligase</keyword>
<keyword id="KW-0479">Metal-binding</keyword>
<keyword id="KW-0547">Nucleotide-binding</keyword>
<keyword id="KW-1185">Reference proteome</keyword>
<keyword id="KW-0862">Zinc</keyword>
<comment type="function">
    <text evidence="1">Catalyzes the ATP-dependent condensation of GlcN-Ins and L-cysteine to form L-Cys-GlcN-Ins.</text>
</comment>
<comment type="catalytic activity">
    <reaction evidence="1">
        <text>1D-myo-inositol 2-amino-2-deoxy-alpha-D-glucopyranoside + L-cysteine + ATP = 1D-myo-inositol 2-(L-cysteinylamino)-2-deoxy-alpha-D-glucopyranoside + AMP + diphosphate + H(+)</text>
        <dbReference type="Rhea" id="RHEA:26176"/>
        <dbReference type="ChEBI" id="CHEBI:15378"/>
        <dbReference type="ChEBI" id="CHEBI:30616"/>
        <dbReference type="ChEBI" id="CHEBI:33019"/>
        <dbReference type="ChEBI" id="CHEBI:35235"/>
        <dbReference type="ChEBI" id="CHEBI:58886"/>
        <dbReference type="ChEBI" id="CHEBI:58887"/>
        <dbReference type="ChEBI" id="CHEBI:456215"/>
        <dbReference type="EC" id="6.3.1.13"/>
    </reaction>
</comment>
<comment type="cofactor">
    <cofactor evidence="1">
        <name>Zn(2+)</name>
        <dbReference type="ChEBI" id="CHEBI:29105"/>
    </cofactor>
    <text evidence="1">Binds 1 zinc ion per subunit.</text>
</comment>
<comment type="subunit">
    <text evidence="1">Monomer.</text>
</comment>
<comment type="similarity">
    <text evidence="1">Belongs to the class-I aminoacyl-tRNA synthetase family. MshC subfamily.</text>
</comment>
<feature type="chain" id="PRO_0000400492" description="L-cysteine:1D-myo-inositol 2-amino-2-deoxy-alpha-D-glucopyranoside ligase">
    <location>
        <begin position="1"/>
        <end position="414"/>
    </location>
</feature>
<feature type="region of interest" description="Disordered" evidence="2">
    <location>
        <begin position="1"/>
        <end position="38"/>
    </location>
</feature>
<feature type="short sequence motif" description="'HIGH' region" evidence="1">
    <location>
        <begin position="50"/>
        <end position="60"/>
    </location>
</feature>
<feature type="short sequence motif" description="'ERGGDP' region" evidence="1">
    <location>
        <begin position="188"/>
        <end position="193"/>
    </location>
</feature>
<feature type="short sequence motif" description="'KMSKS' region" evidence="1">
    <location>
        <begin position="290"/>
        <end position="294"/>
    </location>
</feature>
<feature type="compositionally biased region" description="Low complexity" evidence="2">
    <location>
        <begin position="11"/>
        <end position="38"/>
    </location>
</feature>
<feature type="binding site" evidence="1">
    <location>
        <begin position="48"/>
        <end position="51"/>
    </location>
    <ligand>
        <name>L-cysteinyl-5'-AMP</name>
        <dbReference type="ChEBI" id="CHEBI:144924"/>
    </ligand>
</feature>
<feature type="binding site" evidence="1">
    <location>
        <position position="48"/>
    </location>
    <ligand>
        <name>Zn(2+)</name>
        <dbReference type="ChEBI" id="CHEBI:29105"/>
    </ligand>
</feature>
<feature type="binding site" evidence="1">
    <location>
        <position position="63"/>
    </location>
    <ligand>
        <name>L-cysteinyl-5'-AMP</name>
        <dbReference type="ChEBI" id="CHEBI:144924"/>
    </ligand>
</feature>
<feature type="binding site" evidence="1">
    <location>
        <begin position="86"/>
        <end position="88"/>
    </location>
    <ligand>
        <name>L-cysteinyl-5'-AMP</name>
        <dbReference type="ChEBI" id="CHEBI:144924"/>
    </ligand>
</feature>
<feature type="binding site" evidence="1">
    <location>
        <position position="228"/>
    </location>
    <ligand>
        <name>L-cysteinyl-5'-AMP</name>
        <dbReference type="ChEBI" id="CHEBI:144924"/>
    </ligand>
</feature>
<feature type="binding site" evidence="1">
    <location>
        <position position="232"/>
    </location>
    <ligand>
        <name>Zn(2+)</name>
        <dbReference type="ChEBI" id="CHEBI:29105"/>
    </ligand>
</feature>
<feature type="binding site" evidence="1">
    <location>
        <begin position="250"/>
        <end position="252"/>
    </location>
    <ligand>
        <name>L-cysteinyl-5'-AMP</name>
        <dbReference type="ChEBI" id="CHEBI:144924"/>
    </ligand>
</feature>
<feature type="binding site" evidence="1">
    <location>
        <position position="257"/>
    </location>
    <ligand>
        <name>Zn(2+)</name>
        <dbReference type="ChEBI" id="CHEBI:29105"/>
    </ligand>
</feature>
<feature type="binding site" evidence="1">
    <location>
        <position position="284"/>
    </location>
    <ligand>
        <name>L-cysteinyl-5'-AMP</name>
        <dbReference type="ChEBI" id="CHEBI:144924"/>
    </ligand>
</feature>
<proteinExistence type="inferred from homology"/>
<accession>D1A2Q5</accession>
<evidence type="ECO:0000255" key="1">
    <source>
        <dbReference type="HAMAP-Rule" id="MF_01697"/>
    </source>
</evidence>
<evidence type="ECO:0000256" key="2">
    <source>
        <dbReference type="SAM" id="MobiDB-lite"/>
    </source>
</evidence>
<name>MSHC_THECD</name>
<dbReference type="EC" id="6.3.1.13" evidence="1"/>
<dbReference type="EMBL" id="CP001738">
    <property type="protein sequence ID" value="ACY97853.1"/>
    <property type="molecule type" value="Genomic_DNA"/>
</dbReference>
<dbReference type="RefSeq" id="WP_012852637.1">
    <property type="nucleotide sequence ID" value="NC_013510.1"/>
</dbReference>
<dbReference type="SMR" id="D1A2Q5"/>
<dbReference type="STRING" id="471852.Tcur_2287"/>
<dbReference type="KEGG" id="tcu:Tcur_2287"/>
<dbReference type="eggNOG" id="COG0215">
    <property type="taxonomic scope" value="Bacteria"/>
</dbReference>
<dbReference type="HOGENOM" id="CLU_013528_0_0_11"/>
<dbReference type="OrthoDB" id="9815130at2"/>
<dbReference type="Proteomes" id="UP000001918">
    <property type="component" value="Chromosome"/>
</dbReference>
<dbReference type="GO" id="GO:0005829">
    <property type="term" value="C:cytosol"/>
    <property type="evidence" value="ECO:0007669"/>
    <property type="project" value="TreeGrafter"/>
</dbReference>
<dbReference type="GO" id="GO:0005524">
    <property type="term" value="F:ATP binding"/>
    <property type="evidence" value="ECO:0007669"/>
    <property type="project" value="UniProtKB-KW"/>
</dbReference>
<dbReference type="GO" id="GO:0035446">
    <property type="term" value="F:cysteine-glucosaminylinositol ligase activity"/>
    <property type="evidence" value="ECO:0007669"/>
    <property type="project" value="UniProtKB-UniRule"/>
</dbReference>
<dbReference type="GO" id="GO:0004817">
    <property type="term" value="F:cysteine-tRNA ligase activity"/>
    <property type="evidence" value="ECO:0007669"/>
    <property type="project" value="TreeGrafter"/>
</dbReference>
<dbReference type="GO" id="GO:0008270">
    <property type="term" value="F:zinc ion binding"/>
    <property type="evidence" value="ECO:0007669"/>
    <property type="project" value="UniProtKB-UniRule"/>
</dbReference>
<dbReference type="GO" id="GO:0006423">
    <property type="term" value="P:cysteinyl-tRNA aminoacylation"/>
    <property type="evidence" value="ECO:0007669"/>
    <property type="project" value="TreeGrafter"/>
</dbReference>
<dbReference type="GO" id="GO:0010125">
    <property type="term" value="P:mycothiol biosynthetic process"/>
    <property type="evidence" value="ECO:0007669"/>
    <property type="project" value="UniProtKB-UniRule"/>
</dbReference>
<dbReference type="CDD" id="cd00672">
    <property type="entry name" value="CysRS_core"/>
    <property type="match status" value="1"/>
</dbReference>
<dbReference type="FunFam" id="3.40.50.620:FF:000134">
    <property type="entry name" value="L-cysteine:1D-myo-inositol 2-amino-2-deoxy-alpha-D-glucopyranoside ligase"/>
    <property type="match status" value="1"/>
</dbReference>
<dbReference type="Gene3D" id="1.20.120.640">
    <property type="entry name" value="Anticodon-binding domain of a subclass of class I aminoacyl-tRNA synthetases"/>
    <property type="match status" value="1"/>
</dbReference>
<dbReference type="Gene3D" id="3.40.50.620">
    <property type="entry name" value="HUPs"/>
    <property type="match status" value="1"/>
</dbReference>
<dbReference type="HAMAP" id="MF_01697">
    <property type="entry name" value="MshC"/>
    <property type="match status" value="1"/>
</dbReference>
<dbReference type="InterPro" id="IPR024909">
    <property type="entry name" value="Cys-tRNA/MSH_ligase"/>
</dbReference>
<dbReference type="InterPro" id="IPR017812">
    <property type="entry name" value="Mycothiol_ligase_MshC"/>
</dbReference>
<dbReference type="InterPro" id="IPR014729">
    <property type="entry name" value="Rossmann-like_a/b/a_fold"/>
</dbReference>
<dbReference type="InterPro" id="IPR032678">
    <property type="entry name" value="tRNA-synt_1_cat_dom"/>
</dbReference>
<dbReference type="NCBIfam" id="TIGR03447">
    <property type="entry name" value="mycothiol_MshC"/>
    <property type="match status" value="1"/>
</dbReference>
<dbReference type="PANTHER" id="PTHR10890:SF3">
    <property type="entry name" value="CYSTEINE--TRNA LIGASE, CYTOPLASMIC"/>
    <property type="match status" value="1"/>
</dbReference>
<dbReference type="PANTHER" id="PTHR10890">
    <property type="entry name" value="CYSTEINYL-TRNA SYNTHETASE"/>
    <property type="match status" value="1"/>
</dbReference>
<dbReference type="Pfam" id="PF01406">
    <property type="entry name" value="tRNA-synt_1e"/>
    <property type="match status" value="1"/>
</dbReference>
<dbReference type="PRINTS" id="PR00983">
    <property type="entry name" value="TRNASYNTHCYS"/>
</dbReference>
<dbReference type="SUPFAM" id="SSF52374">
    <property type="entry name" value="Nucleotidylyl transferase"/>
    <property type="match status" value="1"/>
</dbReference>
<reference key="1">
    <citation type="journal article" date="2011" name="Stand. Genomic Sci.">
        <title>Complete genome sequence of Thermomonospora curvata type strain (B9).</title>
        <authorList>
            <person name="Chertkov O."/>
            <person name="Sikorski J."/>
            <person name="Nolan M."/>
            <person name="Lapidus A."/>
            <person name="Lucas S."/>
            <person name="Del Rio T.G."/>
            <person name="Tice H."/>
            <person name="Cheng J.F."/>
            <person name="Goodwin L."/>
            <person name="Pitluck S."/>
            <person name="Liolios K."/>
            <person name="Ivanova N."/>
            <person name="Mavromatis K."/>
            <person name="Mikhailova N."/>
            <person name="Ovchinnikova G."/>
            <person name="Pati A."/>
            <person name="Chen A."/>
            <person name="Palaniappan K."/>
            <person name="Djao O.D."/>
            <person name="Land M."/>
            <person name="Hauser L."/>
            <person name="Chang Y.J."/>
            <person name="Jeffries C.D."/>
            <person name="Brettin T."/>
            <person name="Han C."/>
            <person name="Detter J.C."/>
            <person name="Rohde M."/>
            <person name="Goeker M."/>
            <person name="Woyke T."/>
            <person name="Bristow J."/>
            <person name="Eisen J.A."/>
            <person name="Markowitz V."/>
            <person name="Hugenholtz P."/>
            <person name="Klenk H.P."/>
            <person name="Kyrpides N.C."/>
        </authorList>
    </citation>
    <scope>NUCLEOTIDE SEQUENCE [LARGE SCALE GENOMIC DNA]</scope>
    <source>
        <strain>ATCC 19995 / DSM 43183 / JCM 3096 / KCTC 9072 / NBRC 15933 / NCIMB 10081 / Henssen B9</strain>
    </source>
</reference>
<organism>
    <name type="scientific">Thermomonospora curvata (strain ATCC 19995 / DSM 43183 / JCM 3096 / KCTC 9072 / NBRC 15933 / NCIMB 10081 / Henssen B9)</name>
    <dbReference type="NCBI Taxonomy" id="471852"/>
    <lineage>
        <taxon>Bacteria</taxon>
        <taxon>Bacillati</taxon>
        <taxon>Actinomycetota</taxon>
        <taxon>Actinomycetes</taxon>
        <taxon>Streptosporangiales</taxon>
        <taxon>Thermomonosporaceae</taxon>
        <taxon>Thermomonospora</taxon>
    </lineage>
</organism>
<protein>
    <recommendedName>
        <fullName evidence="1">L-cysteine:1D-myo-inositol 2-amino-2-deoxy-alpha-D-glucopyranoside ligase</fullName>
        <shortName evidence="1">L-Cys:GlcN-Ins ligase</shortName>
        <ecNumber evidence="1">6.3.1.13</ecNumber>
    </recommendedName>
    <alternativeName>
        <fullName evidence="1">Mycothiol ligase</fullName>
        <shortName evidence="1">MSH ligase</shortName>
    </alternativeName>
</protein>
<sequence length="414" mass="45135">MRSWPAPEVPNLPEAGLPGPALPLHLHDTATGTVRPTRPGPTARMYVCGITPYDATHLGHAATYLAFDLVNRVWRDGGHKVCYVQNVTDVDDPLLERAEQTGQDWRELADREIALFRDDMTALRILPPDHYVGAVEAIPLIVEMIERLRSRGAVYEVNGDLYFPISADPDFGRVSGLTTEQMLPLFAERGGDPQRRGKKDPLDALLWRAQRPGEPSWESPFGPGRPGWHVECSAISIHHLGMAFDVEGGGSDLAFPHHEMSASHAQVATGRHPHAKAYVHTGMVGLDGQKMSKSLGNLVFVSRLRADGADPMAVRLALLAHHYRSDWEWTGEDLPRATARLERWRAAVQLPAGPPAAAVAAEVRRHLSQDLDAPSALVTVDRWAEQALAGAGERDPAAPAQVRAVVDALLGVAL</sequence>
<gene>
    <name evidence="1" type="primary">mshC</name>
    <name type="ordered locus">Tcur_2287</name>
</gene>